<feature type="chain" id="PRO_0000416824" description="Cation/calcium exchanger 5">
    <location>
        <begin position="1"/>
        <end position="546"/>
    </location>
</feature>
<feature type="transmembrane region" description="Helical" evidence="1">
    <location>
        <begin position="13"/>
        <end position="33"/>
    </location>
</feature>
<feature type="transmembrane region" description="Helical" evidence="1">
    <location>
        <begin position="88"/>
        <end position="108"/>
    </location>
</feature>
<feature type="transmembrane region" description="Helical" evidence="1">
    <location>
        <begin position="134"/>
        <end position="154"/>
    </location>
</feature>
<feature type="transmembrane region" description="Helical" evidence="1">
    <location>
        <begin position="163"/>
        <end position="183"/>
    </location>
</feature>
<feature type="transmembrane region" description="Helical" evidence="1">
    <location>
        <begin position="194"/>
        <end position="214"/>
    </location>
</feature>
<feature type="transmembrane region" description="Helical" evidence="1">
    <location>
        <begin position="218"/>
        <end position="238"/>
    </location>
</feature>
<feature type="transmembrane region" description="Helical" evidence="1">
    <location>
        <begin position="323"/>
        <end position="343"/>
    </location>
</feature>
<feature type="transmembrane region" description="Helical" evidence="1">
    <location>
        <begin position="356"/>
        <end position="376"/>
    </location>
</feature>
<feature type="transmembrane region" description="Helical" evidence="1">
    <location>
        <begin position="388"/>
        <end position="408"/>
    </location>
</feature>
<feature type="transmembrane region" description="Helical" evidence="1">
    <location>
        <begin position="423"/>
        <end position="445"/>
    </location>
</feature>
<feature type="transmembrane region" description="Helical" evidence="1">
    <location>
        <begin position="455"/>
        <end position="475"/>
    </location>
</feature>
<feature type="transmembrane region" description="Helical" evidence="1">
    <location>
        <begin position="492"/>
        <end position="512"/>
    </location>
</feature>
<feature type="transmembrane region" description="Helical" evidence="1">
    <location>
        <begin position="522"/>
        <end position="542"/>
    </location>
</feature>
<name>CCX5_ARATH</name>
<keyword id="KW-0050">Antiport</keyword>
<keyword id="KW-1003">Cell membrane</keyword>
<keyword id="KW-0406">Ion transport</keyword>
<keyword id="KW-0472">Membrane</keyword>
<keyword id="KW-0630">Potassium</keyword>
<keyword id="KW-0633">Potassium transport</keyword>
<keyword id="KW-1185">Reference proteome</keyword>
<keyword id="KW-0915">Sodium</keyword>
<keyword id="KW-0739">Sodium transport</keyword>
<keyword id="KW-0812">Transmembrane</keyword>
<keyword id="KW-1133">Transmembrane helix</keyword>
<keyword id="KW-0813">Transport</keyword>
<comment type="function">
    <text evidence="2">Membrane-localized H(+)-dependent K(+) and Na(+) transporter.</text>
</comment>
<comment type="subcellular location">
    <subcellularLocation>
        <location evidence="2">Cell membrane</location>
        <topology evidence="2">Multi-pass membrane protein</topology>
    </subcellularLocation>
</comment>
<comment type="similarity">
    <text evidence="3">Belongs to the Ca(2+):cation antiporter (CaCA) (TC 2.A.19) family. Cation/calcium exchanger (CCX) subfamily.</text>
</comment>
<reference key="1">
    <citation type="journal article" date="2000" name="Nature">
        <title>Sequence and analysis of chromosome 1 of the plant Arabidopsis thaliana.</title>
        <authorList>
            <person name="Theologis A."/>
            <person name="Ecker J.R."/>
            <person name="Palm C.J."/>
            <person name="Federspiel N.A."/>
            <person name="Kaul S."/>
            <person name="White O."/>
            <person name="Alonso J."/>
            <person name="Altafi H."/>
            <person name="Araujo R."/>
            <person name="Bowman C.L."/>
            <person name="Brooks S.Y."/>
            <person name="Buehler E."/>
            <person name="Chan A."/>
            <person name="Chao Q."/>
            <person name="Chen H."/>
            <person name="Cheuk R.F."/>
            <person name="Chin C.W."/>
            <person name="Chung M.K."/>
            <person name="Conn L."/>
            <person name="Conway A.B."/>
            <person name="Conway A.R."/>
            <person name="Creasy T.H."/>
            <person name="Dewar K."/>
            <person name="Dunn P."/>
            <person name="Etgu P."/>
            <person name="Feldblyum T.V."/>
            <person name="Feng J.-D."/>
            <person name="Fong B."/>
            <person name="Fujii C.Y."/>
            <person name="Gill J.E."/>
            <person name="Goldsmith A.D."/>
            <person name="Haas B."/>
            <person name="Hansen N.F."/>
            <person name="Hughes B."/>
            <person name="Huizar L."/>
            <person name="Hunter J.L."/>
            <person name="Jenkins J."/>
            <person name="Johnson-Hopson C."/>
            <person name="Khan S."/>
            <person name="Khaykin E."/>
            <person name="Kim C.J."/>
            <person name="Koo H.L."/>
            <person name="Kremenetskaia I."/>
            <person name="Kurtz D.B."/>
            <person name="Kwan A."/>
            <person name="Lam B."/>
            <person name="Langin-Hooper S."/>
            <person name="Lee A."/>
            <person name="Lee J.M."/>
            <person name="Lenz C.A."/>
            <person name="Li J.H."/>
            <person name="Li Y.-P."/>
            <person name="Lin X."/>
            <person name="Liu S.X."/>
            <person name="Liu Z.A."/>
            <person name="Luros J.S."/>
            <person name="Maiti R."/>
            <person name="Marziali A."/>
            <person name="Militscher J."/>
            <person name="Miranda M."/>
            <person name="Nguyen M."/>
            <person name="Nierman W.C."/>
            <person name="Osborne B.I."/>
            <person name="Pai G."/>
            <person name="Peterson J."/>
            <person name="Pham P.K."/>
            <person name="Rizzo M."/>
            <person name="Rooney T."/>
            <person name="Rowley D."/>
            <person name="Sakano H."/>
            <person name="Salzberg S.L."/>
            <person name="Schwartz J.R."/>
            <person name="Shinn P."/>
            <person name="Southwick A.M."/>
            <person name="Sun H."/>
            <person name="Tallon L.J."/>
            <person name="Tambunga G."/>
            <person name="Toriumi M.J."/>
            <person name="Town C.D."/>
            <person name="Utterback T."/>
            <person name="Van Aken S."/>
            <person name="Vaysberg M."/>
            <person name="Vysotskaia V.S."/>
            <person name="Walker M."/>
            <person name="Wu D."/>
            <person name="Yu G."/>
            <person name="Fraser C.M."/>
            <person name="Venter J.C."/>
            <person name="Davis R.W."/>
        </authorList>
    </citation>
    <scope>NUCLEOTIDE SEQUENCE [LARGE SCALE GENOMIC DNA]</scope>
    <source>
        <strain>cv. Columbia</strain>
    </source>
</reference>
<reference key="2">
    <citation type="journal article" date="2017" name="Plant J.">
        <title>Araport11: a complete reannotation of the Arabidopsis thaliana reference genome.</title>
        <authorList>
            <person name="Cheng C.Y."/>
            <person name="Krishnakumar V."/>
            <person name="Chan A.P."/>
            <person name="Thibaud-Nissen F."/>
            <person name="Schobel S."/>
            <person name="Town C.D."/>
        </authorList>
    </citation>
    <scope>GENOME REANNOTATION</scope>
    <source>
        <strain>cv. Columbia</strain>
    </source>
</reference>
<reference key="3">
    <citation type="submission" date="2004-03" db="EMBL/GenBank/DDBJ databases">
        <title>Arabidopsis ORF clones.</title>
        <authorList>
            <person name="Cheuk R.F."/>
            <person name="Chen H."/>
            <person name="Kim C.J."/>
            <person name="Shinn P."/>
            <person name="Carninci P."/>
            <person name="Hayashizaki Y."/>
            <person name="Ishida J."/>
            <person name="Kamiya A."/>
            <person name="Kawai J."/>
            <person name="Narusaka M."/>
            <person name="Sakurai T."/>
            <person name="Satou M."/>
            <person name="Seki M."/>
            <person name="Shinozaki K."/>
            <person name="Ecker J.R."/>
        </authorList>
    </citation>
    <scope>NUCLEOTIDE SEQUENCE [LARGE SCALE MRNA]</scope>
    <source>
        <strain>cv. Columbia</strain>
    </source>
</reference>
<reference key="4">
    <citation type="submission" date="2005-03" db="EMBL/GenBank/DDBJ databases">
        <title>Large-scale analysis of RIKEN Arabidopsis full-length (RAFL) cDNAs.</title>
        <authorList>
            <person name="Totoki Y."/>
            <person name="Seki M."/>
            <person name="Ishida J."/>
            <person name="Nakajima M."/>
            <person name="Enju A."/>
            <person name="Kamiya A."/>
            <person name="Narusaka M."/>
            <person name="Shin-i T."/>
            <person name="Nakagawa M."/>
            <person name="Sakamoto N."/>
            <person name="Oishi K."/>
            <person name="Kohara Y."/>
            <person name="Kobayashi M."/>
            <person name="Toyoda A."/>
            <person name="Sakaki Y."/>
            <person name="Sakurai T."/>
            <person name="Iida K."/>
            <person name="Akiyama K."/>
            <person name="Satou M."/>
            <person name="Toyoda T."/>
            <person name="Konagaya A."/>
            <person name="Carninci P."/>
            <person name="Kawai J."/>
            <person name="Hayashizaki Y."/>
            <person name="Shinozaki K."/>
        </authorList>
    </citation>
    <scope>NUCLEOTIDE SEQUENCE [LARGE SCALE MRNA]</scope>
    <source>
        <strain>cv. Columbia</strain>
    </source>
</reference>
<reference key="5">
    <citation type="journal article" date="2001" name="Plant Physiol.">
        <title>Phylogenetic relationships within cation transporter families of Arabidopsis.</title>
        <authorList>
            <person name="Maeser P."/>
            <person name="Thomine S."/>
            <person name="Schroeder J.I."/>
            <person name="Ward J.M."/>
            <person name="Hirschi K."/>
            <person name="Sze H."/>
            <person name="Talke I.N."/>
            <person name="Amtmann A."/>
            <person name="Maathuis F.J.M."/>
            <person name="Sanders D."/>
            <person name="Harper J.F."/>
            <person name="Tchieu J."/>
            <person name="Gribskov M."/>
            <person name="Persans M.W."/>
            <person name="Salt D.E."/>
            <person name="Kim S.A."/>
            <person name="Guerinot M.L."/>
        </authorList>
    </citation>
    <scope>GENE FAMILY</scope>
    <scope>NOMENCLATURE</scope>
</reference>
<reference key="6">
    <citation type="journal article" date="2011" name="Biochem. Biophys. Res. Commun.">
        <title>Characterization of an AtCCX5 gene from Arabidopsis thaliana that involves in high-affinity K uptake and Na transport in yeast.</title>
        <authorList>
            <person name="Zhang X."/>
            <person name="Zhang M."/>
            <person name="Takano T."/>
            <person name="Liu S."/>
        </authorList>
    </citation>
    <scope>FUNCTION</scope>
    <scope>SUBCELLULAR LOCATION</scope>
</reference>
<organism>
    <name type="scientific">Arabidopsis thaliana</name>
    <name type="common">Mouse-ear cress</name>
    <dbReference type="NCBI Taxonomy" id="3702"/>
    <lineage>
        <taxon>Eukaryota</taxon>
        <taxon>Viridiplantae</taxon>
        <taxon>Streptophyta</taxon>
        <taxon>Embryophyta</taxon>
        <taxon>Tracheophyta</taxon>
        <taxon>Spermatophyta</taxon>
        <taxon>Magnoliopsida</taxon>
        <taxon>eudicotyledons</taxon>
        <taxon>Gunneridae</taxon>
        <taxon>Pentapetalae</taxon>
        <taxon>rosids</taxon>
        <taxon>malvids</taxon>
        <taxon>Brassicales</taxon>
        <taxon>Brassicaceae</taxon>
        <taxon>Camelineae</taxon>
        <taxon>Arabidopsis</taxon>
    </lineage>
</organism>
<dbReference type="EMBL" id="AC000106">
    <property type="protein sequence ID" value="AAB70411.1"/>
    <property type="molecule type" value="Genomic_DNA"/>
</dbReference>
<dbReference type="EMBL" id="CP002684">
    <property type="protein sequence ID" value="AEE28373.1"/>
    <property type="molecule type" value="Genomic_DNA"/>
</dbReference>
<dbReference type="EMBL" id="BT012294">
    <property type="protein sequence ID" value="AAS76781.1"/>
    <property type="molecule type" value="mRNA"/>
</dbReference>
<dbReference type="EMBL" id="AK221635">
    <property type="protein sequence ID" value="BAD95271.1"/>
    <property type="molecule type" value="mRNA"/>
</dbReference>
<dbReference type="PIR" id="D86221">
    <property type="entry name" value="D86221"/>
</dbReference>
<dbReference type="RefSeq" id="NP_172370.3">
    <property type="nucleotide sequence ID" value="NM_100767.6"/>
</dbReference>
<dbReference type="BioGRID" id="22657">
    <property type="interactions" value="14"/>
</dbReference>
<dbReference type="FunCoup" id="O04034">
    <property type="interactions" value="265"/>
</dbReference>
<dbReference type="IntAct" id="O04034">
    <property type="interactions" value="14"/>
</dbReference>
<dbReference type="STRING" id="3702.O04034"/>
<dbReference type="TCDB" id="2.A.19.4.8">
    <property type="family name" value="the ca(2+):cation antiporter (caca) family"/>
</dbReference>
<dbReference type="PaxDb" id="3702-AT1G08960.1"/>
<dbReference type="ProteomicsDB" id="224467"/>
<dbReference type="EnsemblPlants" id="AT1G08960.1">
    <property type="protein sequence ID" value="AT1G08960.1"/>
    <property type="gene ID" value="AT1G08960"/>
</dbReference>
<dbReference type="GeneID" id="837416"/>
<dbReference type="Gramene" id="AT1G08960.1">
    <property type="protein sequence ID" value="AT1G08960.1"/>
    <property type="gene ID" value="AT1G08960"/>
</dbReference>
<dbReference type="KEGG" id="ath:AT1G08960"/>
<dbReference type="Araport" id="AT1G08960"/>
<dbReference type="TAIR" id="AT1G08960">
    <property type="gene designation" value="CAX11"/>
</dbReference>
<dbReference type="eggNOG" id="KOG2399">
    <property type="taxonomic scope" value="Eukaryota"/>
</dbReference>
<dbReference type="HOGENOM" id="CLU_004979_1_1_1"/>
<dbReference type="InParanoid" id="O04034"/>
<dbReference type="OMA" id="VKQPIDM"/>
<dbReference type="OrthoDB" id="407410at2759"/>
<dbReference type="PhylomeDB" id="O04034"/>
<dbReference type="PRO" id="PR:O04034"/>
<dbReference type="Proteomes" id="UP000006548">
    <property type="component" value="Chromosome 1"/>
</dbReference>
<dbReference type="ExpressionAtlas" id="O04034">
    <property type="expression patterns" value="baseline and differential"/>
</dbReference>
<dbReference type="GO" id="GO:0034399">
    <property type="term" value="C:nuclear periphery"/>
    <property type="evidence" value="ECO:0000314"/>
    <property type="project" value="TAIR"/>
</dbReference>
<dbReference type="GO" id="GO:0005886">
    <property type="term" value="C:plasma membrane"/>
    <property type="evidence" value="ECO:0000314"/>
    <property type="project" value="TAIR"/>
</dbReference>
<dbReference type="GO" id="GO:0015297">
    <property type="term" value="F:antiporter activity"/>
    <property type="evidence" value="ECO:0007669"/>
    <property type="project" value="UniProtKB-KW"/>
</dbReference>
<dbReference type="GO" id="GO:0015079">
    <property type="term" value="F:potassium ion transmembrane transporter activity"/>
    <property type="evidence" value="ECO:0000314"/>
    <property type="project" value="TAIR"/>
</dbReference>
<dbReference type="GO" id="GO:0015081">
    <property type="term" value="F:sodium ion transmembrane transporter activity"/>
    <property type="evidence" value="ECO:0000314"/>
    <property type="project" value="TAIR"/>
</dbReference>
<dbReference type="GO" id="GO:0071805">
    <property type="term" value="P:potassium ion transmembrane transport"/>
    <property type="evidence" value="ECO:0000314"/>
    <property type="project" value="TAIR"/>
</dbReference>
<dbReference type="GO" id="GO:0006814">
    <property type="term" value="P:sodium ion transport"/>
    <property type="evidence" value="ECO:0000314"/>
    <property type="project" value="TAIR"/>
</dbReference>
<dbReference type="FunFam" id="1.20.1420.30:FF:000028">
    <property type="entry name" value="Cation/calcium exchanger 5"/>
    <property type="match status" value="1"/>
</dbReference>
<dbReference type="FunFam" id="1.20.1420.30:FF:000048">
    <property type="entry name" value="Cation/calcium exchanger 5"/>
    <property type="match status" value="1"/>
</dbReference>
<dbReference type="Gene3D" id="1.20.1420.30">
    <property type="entry name" value="NCX, central ion-binding region"/>
    <property type="match status" value="2"/>
</dbReference>
<dbReference type="InterPro" id="IPR051359">
    <property type="entry name" value="CaCA_antiporter"/>
</dbReference>
<dbReference type="InterPro" id="IPR004837">
    <property type="entry name" value="NaCa_Exmemb"/>
</dbReference>
<dbReference type="InterPro" id="IPR044880">
    <property type="entry name" value="NCX_ion-bd_dom_sf"/>
</dbReference>
<dbReference type="PANTHER" id="PTHR12266:SF33">
    <property type="entry name" value="CATION_CALCIUM EXCHANGER 5"/>
    <property type="match status" value="1"/>
</dbReference>
<dbReference type="PANTHER" id="PTHR12266">
    <property type="entry name" value="NA+/CA2+ K+ INDEPENDENT EXCHANGER"/>
    <property type="match status" value="1"/>
</dbReference>
<dbReference type="Pfam" id="PF01699">
    <property type="entry name" value="Na_Ca_ex"/>
    <property type="match status" value="2"/>
</dbReference>
<sequence>MELISSSTIGNSALCLTLISILIFFFLTTTTIPTFPDHPLRSLLDDSQITTNSSSIVNPKSSCVSSRSHDNGGVINYFSLHYCIFNENLFFSIPILSLLILLHFYILIKTAQTHFSTVTTKLADRLNLSPSMAAVTLLALGNGAPDVFASVAALRGGQYRTGFGAILSAGTFVSAFVVGFVAIYAAPFPVDAASFVRDVLFYLIAALFLFYVYLSGEIFVWQAIGFVGFYIFFVGFVFWMDFGTNVEKGKSISEEEKDLLRLQDCEIAAGSLGSYKAEKEHQFSGIFRLYGTISRMWETPVSVLLNLTIPKPSPSEWSRFYRSANIVFCPFALLYTCNSFVQLNHPISFLFPNTHLPLWLVVLFMTSSLAFLHFTVEKQPPKTEQLPVIVVAFIMSVFWISTIAGELLNCLAALGTLLKLPPALLGLTVLAWGNSVGDLVADVAVAKAGRPAMAMAGCFAGPMFNMLVGLGSALVMQTANVYPDAYKLGFHVGIVIAFVFLLLSLMGSLLVITWSRFRVPRFWGICLVGLYVAFTFVSLIIASVST</sequence>
<gene>
    <name type="primary">CCX5</name>
    <name type="synonym">CAX11</name>
    <name type="ordered locus">At1g08960</name>
    <name type="ORF">F7G19.17</name>
</gene>
<evidence type="ECO:0000255" key="1"/>
<evidence type="ECO:0000269" key="2">
    <source>
    </source>
</evidence>
<evidence type="ECO:0000305" key="3"/>
<protein>
    <recommendedName>
        <fullName>Cation/calcium exchanger 5</fullName>
    </recommendedName>
    <alternativeName>
        <fullName>Protein CATION EXCHANGER 11</fullName>
    </alternativeName>
</protein>
<accession>O04034</accession>
<proteinExistence type="evidence at transcript level"/>